<protein>
    <recommendedName>
        <fullName evidence="4">Small ribosomal subunit protein uS5</fullName>
    </recommendedName>
    <alternativeName>
        <fullName>30S ribosomal protein S5</fullName>
    </alternativeName>
</protein>
<feature type="chain" id="PRO_0000293205" description="Small ribosomal subunit protein uS5">
    <location>
        <begin position="1"/>
        <end position="219"/>
    </location>
</feature>
<feature type="domain" description="S5 DRBM" evidence="2">
    <location>
        <begin position="68"/>
        <end position="131"/>
    </location>
</feature>
<feature type="region of interest" description="Disordered" evidence="3">
    <location>
        <begin position="1"/>
        <end position="32"/>
    </location>
</feature>
<organism>
    <name type="scientific">Cenarchaeum symbiosum (strain A)</name>
    <dbReference type="NCBI Taxonomy" id="414004"/>
    <lineage>
        <taxon>Archaea</taxon>
        <taxon>Nitrososphaerota</taxon>
        <taxon>Candidatus Cenarchaeales</taxon>
        <taxon>Candidatus Cenarchaeaceae</taxon>
        <taxon>Candidatus Cenarchaeum</taxon>
    </lineage>
</organism>
<sequence length="219" mass="23545">MSHPQSRPGGRDGRPRRRREPREEAPWVPKTALGKRVNAGEITSLEEIQEAGARIQESGIIKKLLPDLKTEVVDVGIIQKMTSNGQSTRFKAIVAAGNENGYLGIGQGKAKQMRIAIEKANNQALLNVGPIKLGCGSWECRCDQKHSVPFKVRGKGGSVVIEILPAPRGLGLVAGGKIRRLLELAGLKDAYTTAKGSTPTTNSTSKAVLECLRQTFSQG</sequence>
<comment type="function">
    <text evidence="1">With S4 and S12 plays an important role in translational accuracy.</text>
</comment>
<comment type="subunit">
    <text evidence="1">Part of the 30S ribosomal subunit. Contacts protein S4 (By similarity).</text>
</comment>
<comment type="domain">
    <text>The N-terminal domain interacts with the head of the 30S subunit; the C-terminal domain interacts with the body and contacts protein S4. The interaction surface between S4 and S5 is involved in control of translational fidelity.</text>
</comment>
<comment type="similarity">
    <text evidence="4">Belongs to the universal ribosomal protein uS5 family.</text>
</comment>
<dbReference type="EMBL" id="DP000238">
    <property type="protein sequence ID" value="ABK76964.1"/>
    <property type="molecule type" value="Genomic_DNA"/>
</dbReference>
<dbReference type="SMR" id="A0RUE7"/>
<dbReference type="STRING" id="414004.CENSYa_0328"/>
<dbReference type="EnsemblBacteria" id="ABK76964">
    <property type="protein sequence ID" value="ABK76964"/>
    <property type="gene ID" value="CENSYa_0328"/>
</dbReference>
<dbReference type="KEGG" id="csy:CENSYa_0328"/>
<dbReference type="PATRIC" id="fig|414004.10.peg.293"/>
<dbReference type="HOGENOM" id="CLU_065898_0_1_2"/>
<dbReference type="Proteomes" id="UP000000758">
    <property type="component" value="Chromosome"/>
</dbReference>
<dbReference type="GO" id="GO:0022627">
    <property type="term" value="C:cytosolic small ribosomal subunit"/>
    <property type="evidence" value="ECO:0007669"/>
    <property type="project" value="TreeGrafter"/>
</dbReference>
<dbReference type="GO" id="GO:0019843">
    <property type="term" value="F:rRNA binding"/>
    <property type="evidence" value="ECO:0007669"/>
    <property type="project" value="UniProtKB-KW"/>
</dbReference>
<dbReference type="GO" id="GO:0003735">
    <property type="term" value="F:structural constituent of ribosome"/>
    <property type="evidence" value="ECO:0007669"/>
    <property type="project" value="InterPro"/>
</dbReference>
<dbReference type="GO" id="GO:0006412">
    <property type="term" value="P:translation"/>
    <property type="evidence" value="ECO:0007669"/>
    <property type="project" value="InterPro"/>
</dbReference>
<dbReference type="FunFam" id="3.30.230.10:FF:000004">
    <property type="entry name" value="40S ribosomal protein S2"/>
    <property type="match status" value="1"/>
</dbReference>
<dbReference type="Gene3D" id="3.30.160.20">
    <property type="match status" value="1"/>
</dbReference>
<dbReference type="Gene3D" id="3.30.230.10">
    <property type="match status" value="1"/>
</dbReference>
<dbReference type="InterPro" id="IPR020568">
    <property type="entry name" value="Ribosomal_Su5_D2-typ_SF"/>
</dbReference>
<dbReference type="InterPro" id="IPR000851">
    <property type="entry name" value="Ribosomal_uS5"/>
</dbReference>
<dbReference type="InterPro" id="IPR047866">
    <property type="entry name" value="Ribosomal_uS5_arc"/>
</dbReference>
<dbReference type="InterPro" id="IPR005324">
    <property type="entry name" value="Ribosomal_uS5_C"/>
</dbReference>
<dbReference type="InterPro" id="IPR005711">
    <property type="entry name" value="Ribosomal_uS5_euk/arc"/>
</dbReference>
<dbReference type="InterPro" id="IPR013810">
    <property type="entry name" value="Ribosomal_uS5_N"/>
</dbReference>
<dbReference type="InterPro" id="IPR018192">
    <property type="entry name" value="Ribosomal_uS5_N_CS"/>
</dbReference>
<dbReference type="InterPro" id="IPR014721">
    <property type="entry name" value="Ribsml_uS5_D2-typ_fold_subgr"/>
</dbReference>
<dbReference type="NCBIfam" id="NF003125">
    <property type="entry name" value="PRK04044.1"/>
    <property type="match status" value="1"/>
</dbReference>
<dbReference type="NCBIfam" id="TIGR01020">
    <property type="entry name" value="uS5_euk_arch"/>
    <property type="match status" value="1"/>
</dbReference>
<dbReference type="PANTHER" id="PTHR13718:SF4">
    <property type="entry name" value="40S RIBOSOMAL PROTEIN S2"/>
    <property type="match status" value="1"/>
</dbReference>
<dbReference type="PANTHER" id="PTHR13718">
    <property type="entry name" value="RIBOSOMAL S SUBUNIT"/>
    <property type="match status" value="1"/>
</dbReference>
<dbReference type="Pfam" id="PF00333">
    <property type="entry name" value="Ribosomal_S5"/>
    <property type="match status" value="1"/>
</dbReference>
<dbReference type="Pfam" id="PF03719">
    <property type="entry name" value="Ribosomal_S5_C"/>
    <property type="match status" value="1"/>
</dbReference>
<dbReference type="SUPFAM" id="SSF54768">
    <property type="entry name" value="dsRNA-binding domain-like"/>
    <property type="match status" value="1"/>
</dbReference>
<dbReference type="SUPFAM" id="SSF54211">
    <property type="entry name" value="Ribosomal protein S5 domain 2-like"/>
    <property type="match status" value="1"/>
</dbReference>
<dbReference type="PROSITE" id="PS00585">
    <property type="entry name" value="RIBOSOMAL_S5"/>
    <property type="match status" value="1"/>
</dbReference>
<dbReference type="PROSITE" id="PS50881">
    <property type="entry name" value="S5_DSRBD"/>
    <property type="match status" value="1"/>
</dbReference>
<keyword id="KW-1185">Reference proteome</keyword>
<keyword id="KW-0687">Ribonucleoprotein</keyword>
<keyword id="KW-0689">Ribosomal protein</keyword>
<keyword id="KW-0694">RNA-binding</keyword>
<keyword id="KW-0699">rRNA-binding</keyword>
<reference key="1">
    <citation type="journal article" date="2006" name="Proc. Natl. Acad. Sci. U.S.A.">
        <title>Genomic analysis of the uncultivated marine crenarchaeote Cenarchaeum symbiosum.</title>
        <authorList>
            <person name="Hallam S.J."/>
            <person name="Konstantinidis K.T."/>
            <person name="Putnam N."/>
            <person name="Schleper C."/>
            <person name="Watanabe Y."/>
            <person name="Sugahara J."/>
            <person name="Preston C."/>
            <person name="de la Torre J."/>
            <person name="Richardson P.M."/>
            <person name="DeLong E.F."/>
        </authorList>
    </citation>
    <scope>NUCLEOTIDE SEQUENCE [LARGE SCALE GENOMIC DNA]</scope>
    <source>
        <strain>A</strain>
    </source>
</reference>
<name>RS5_CENSY</name>
<proteinExistence type="inferred from homology"/>
<accession>A0RUE7</accession>
<evidence type="ECO:0000250" key="1"/>
<evidence type="ECO:0000255" key="2">
    <source>
        <dbReference type="PROSITE-ProRule" id="PRU00268"/>
    </source>
</evidence>
<evidence type="ECO:0000256" key="3">
    <source>
        <dbReference type="SAM" id="MobiDB-lite"/>
    </source>
</evidence>
<evidence type="ECO:0000305" key="4"/>
<gene>
    <name type="primary">rps5</name>
    <name type="ordered locus">CENSYa_0328</name>
</gene>